<organism>
    <name type="scientific">Schizosaccharomyces pombe (strain 972 / ATCC 24843)</name>
    <name type="common">Fission yeast</name>
    <dbReference type="NCBI Taxonomy" id="284812"/>
    <lineage>
        <taxon>Eukaryota</taxon>
        <taxon>Fungi</taxon>
        <taxon>Dikarya</taxon>
        <taxon>Ascomycota</taxon>
        <taxon>Taphrinomycotina</taxon>
        <taxon>Schizosaccharomycetes</taxon>
        <taxon>Schizosaccharomycetales</taxon>
        <taxon>Schizosaccharomycetaceae</taxon>
        <taxon>Schizosaccharomyces</taxon>
    </lineage>
</organism>
<gene>
    <name type="primary">kei1</name>
    <name type="ORF">SPAC26H5.13c</name>
</gene>
<protein>
    <recommendedName>
        <fullName>Inositol phosphorylceramide synthase regulatory subunit kei1</fullName>
        <shortName>ICP synthase regulatory subunit kei1</shortName>
    </recommendedName>
</protein>
<feature type="chain" id="PRO_0000341600" description="Inositol phosphorylceramide synthase regulatory subunit kei1">
    <location>
        <begin position="1"/>
        <end position="236"/>
    </location>
</feature>
<feature type="transmembrane region" description="Helical" evidence="2">
    <location>
        <begin position="34"/>
        <end position="54"/>
    </location>
</feature>
<feature type="transmembrane region" description="Helical" evidence="2">
    <location>
        <begin position="64"/>
        <end position="84"/>
    </location>
</feature>
<feature type="transmembrane region" description="Helical" evidence="2">
    <location>
        <begin position="93"/>
        <end position="113"/>
    </location>
</feature>
<feature type="transmembrane region" description="Helical" evidence="2">
    <location>
        <begin position="151"/>
        <end position="171"/>
    </location>
</feature>
<comment type="function">
    <text evidence="1">Regulatory component of the inositol phosphorylceramide (ICP) synthase which catalyzes the addition of a phosphorylinositol group onto ceramide to form inositol phosphorylceramide, an essential step in sphingolipid biosynthesis. Helps the medial Golgi localization of IPC synthase in a COPI vesicle-dependent manner (By similarity).</text>
</comment>
<comment type="subunit">
    <text evidence="1">Component of the inositol phosphorylceramide synthase complex composed of at least aur1 and kei1.</text>
</comment>
<comment type="subcellular location">
    <subcellularLocation>
        <location evidence="3">Golgi apparatus membrane</location>
        <topology evidence="3">Multi-pass membrane protein</topology>
    </subcellularLocation>
</comment>
<comment type="similarity">
    <text evidence="4">Belongs to the KEI1 family.</text>
</comment>
<proteinExistence type="inferred from homology"/>
<dbReference type="EMBL" id="CU329670">
    <property type="protein sequence ID" value="CAB16198.1"/>
    <property type="molecule type" value="Genomic_DNA"/>
</dbReference>
<dbReference type="PIR" id="T38432">
    <property type="entry name" value="T38432"/>
</dbReference>
<dbReference type="RefSeq" id="NP_594460.1">
    <property type="nucleotide sequence ID" value="NM_001019889.2"/>
</dbReference>
<dbReference type="SMR" id="O13994"/>
<dbReference type="FunCoup" id="O13994">
    <property type="interactions" value="37"/>
</dbReference>
<dbReference type="STRING" id="284812.O13994"/>
<dbReference type="iPTMnet" id="O13994"/>
<dbReference type="PaxDb" id="4896-SPAC26H5.13c.1"/>
<dbReference type="EnsemblFungi" id="SPAC26H5.13c.1">
    <property type="protein sequence ID" value="SPAC26H5.13c.1:pep"/>
    <property type="gene ID" value="SPAC26H5.13c"/>
</dbReference>
<dbReference type="GeneID" id="2541523"/>
<dbReference type="KEGG" id="spo:2541523"/>
<dbReference type="PomBase" id="SPAC26H5.13c">
    <property type="gene designation" value="kei1"/>
</dbReference>
<dbReference type="VEuPathDB" id="FungiDB:SPAC26H5.13c"/>
<dbReference type="eggNOG" id="ENOG502S8B2">
    <property type="taxonomic scope" value="Eukaryota"/>
</dbReference>
<dbReference type="HOGENOM" id="CLU_1180805_0_0_1"/>
<dbReference type="InParanoid" id="O13994"/>
<dbReference type="OMA" id="CEVIVWF"/>
<dbReference type="PRO" id="PR:O13994"/>
<dbReference type="Proteomes" id="UP000002485">
    <property type="component" value="Chromosome I"/>
</dbReference>
<dbReference type="GO" id="GO:0005794">
    <property type="term" value="C:Golgi apparatus"/>
    <property type="evidence" value="ECO:0007005"/>
    <property type="project" value="PomBase"/>
</dbReference>
<dbReference type="GO" id="GO:0000139">
    <property type="term" value="C:Golgi membrane"/>
    <property type="evidence" value="ECO:0000318"/>
    <property type="project" value="GO_Central"/>
</dbReference>
<dbReference type="GO" id="GO:0070916">
    <property type="term" value="C:inositol phosphoceramide synthase complex"/>
    <property type="evidence" value="ECO:0000318"/>
    <property type="project" value="GO_Central"/>
</dbReference>
<dbReference type="GO" id="GO:0070917">
    <property type="term" value="F:inositol phosphoceramide synthase regulator activity"/>
    <property type="evidence" value="ECO:0000318"/>
    <property type="project" value="GO_Central"/>
</dbReference>
<dbReference type="GO" id="GO:0006673">
    <property type="term" value="P:inositol phosphoceramide metabolic process"/>
    <property type="evidence" value="ECO:0000318"/>
    <property type="project" value="GO_Central"/>
</dbReference>
<dbReference type="GO" id="GO:0030148">
    <property type="term" value="P:sphingolipid biosynthetic process"/>
    <property type="evidence" value="ECO:0000305"/>
    <property type="project" value="PomBase"/>
</dbReference>
<dbReference type="InterPro" id="IPR013862">
    <property type="entry name" value="Kei1"/>
</dbReference>
<dbReference type="PANTHER" id="PTHR28077">
    <property type="entry name" value="INOSITOL PHOSPHORYLCERAMIDE SYNTHASE REGULATORY SUBUNIT KEI1"/>
    <property type="match status" value="1"/>
</dbReference>
<dbReference type="PANTHER" id="PTHR28077:SF1">
    <property type="entry name" value="INOSITOL PHOSPHORYLCERAMIDE SYNTHASE REGULATORY SUBUNIT KEI1"/>
    <property type="match status" value="1"/>
</dbReference>
<dbReference type="Pfam" id="PF08552">
    <property type="entry name" value="Kei1"/>
    <property type="match status" value="1"/>
</dbReference>
<name>KEI1_SCHPO</name>
<evidence type="ECO:0000250" key="1"/>
<evidence type="ECO:0000255" key="2"/>
<evidence type="ECO:0000269" key="3">
    <source>
    </source>
</evidence>
<evidence type="ECO:0000305" key="4"/>
<accession>O13994</accession>
<keyword id="KW-0333">Golgi apparatus</keyword>
<keyword id="KW-0443">Lipid metabolism</keyword>
<keyword id="KW-0472">Membrane</keyword>
<keyword id="KW-1185">Reference proteome</keyword>
<keyword id="KW-0746">Sphingolipid metabolism</keyword>
<keyword id="KW-0812">Transmembrane</keyword>
<keyword id="KW-1133">Transmembrane helix</keyword>
<reference key="1">
    <citation type="journal article" date="2002" name="Nature">
        <title>The genome sequence of Schizosaccharomyces pombe.</title>
        <authorList>
            <person name="Wood V."/>
            <person name="Gwilliam R."/>
            <person name="Rajandream M.A."/>
            <person name="Lyne M.H."/>
            <person name="Lyne R."/>
            <person name="Stewart A."/>
            <person name="Sgouros J.G."/>
            <person name="Peat N."/>
            <person name="Hayles J."/>
            <person name="Baker S.G."/>
            <person name="Basham D."/>
            <person name="Bowman S."/>
            <person name="Brooks K."/>
            <person name="Brown D."/>
            <person name="Brown S."/>
            <person name="Chillingworth T."/>
            <person name="Churcher C.M."/>
            <person name="Collins M."/>
            <person name="Connor R."/>
            <person name="Cronin A."/>
            <person name="Davis P."/>
            <person name="Feltwell T."/>
            <person name="Fraser A."/>
            <person name="Gentles S."/>
            <person name="Goble A."/>
            <person name="Hamlin N."/>
            <person name="Harris D.E."/>
            <person name="Hidalgo J."/>
            <person name="Hodgson G."/>
            <person name="Holroyd S."/>
            <person name="Hornsby T."/>
            <person name="Howarth S."/>
            <person name="Huckle E.J."/>
            <person name="Hunt S."/>
            <person name="Jagels K."/>
            <person name="James K.D."/>
            <person name="Jones L."/>
            <person name="Jones M."/>
            <person name="Leather S."/>
            <person name="McDonald S."/>
            <person name="McLean J."/>
            <person name="Mooney P."/>
            <person name="Moule S."/>
            <person name="Mungall K.L."/>
            <person name="Murphy L.D."/>
            <person name="Niblett D."/>
            <person name="Odell C."/>
            <person name="Oliver K."/>
            <person name="O'Neil S."/>
            <person name="Pearson D."/>
            <person name="Quail M.A."/>
            <person name="Rabbinowitsch E."/>
            <person name="Rutherford K.M."/>
            <person name="Rutter S."/>
            <person name="Saunders D."/>
            <person name="Seeger K."/>
            <person name="Sharp S."/>
            <person name="Skelton J."/>
            <person name="Simmonds M.N."/>
            <person name="Squares R."/>
            <person name="Squares S."/>
            <person name="Stevens K."/>
            <person name="Taylor K."/>
            <person name="Taylor R.G."/>
            <person name="Tivey A."/>
            <person name="Walsh S.V."/>
            <person name="Warren T."/>
            <person name="Whitehead S."/>
            <person name="Woodward J.R."/>
            <person name="Volckaert G."/>
            <person name="Aert R."/>
            <person name="Robben J."/>
            <person name="Grymonprez B."/>
            <person name="Weltjens I."/>
            <person name="Vanstreels E."/>
            <person name="Rieger M."/>
            <person name="Schaefer M."/>
            <person name="Mueller-Auer S."/>
            <person name="Gabel C."/>
            <person name="Fuchs M."/>
            <person name="Duesterhoeft A."/>
            <person name="Fritzc C."/>
            <person name="Holzer E."/>
            <person name="Moestl D."/>
            <person name="Hilbert H."/>
            <person name="Borzym K."/>
            <person name="Langer I."/>
            <person name="Beck A."/>
            <person name="Lehrach H."/>
            <person name="Reinhardt R."/>
            <person name="Pohl T.M."/>
            <person name="Eger P."/>
            <person name="Zimmermann W."/>
            <person name="Wedler H."/>
            <person name="Wambutt R."/>
            <person name="Purnelle B."/>
            <person name="Goffeau A."/>
            <person name="Cadieu E."/>
            <person name="Dreano S."/>
            <person name="Gloux S."/>
            <person name="Lelaure V."/>
            <person name="Mottier S."/>
            <person name="Galibert F."/>
            <person name="Aves S.J."/>
            <person name="Xiang Z."/>
            <person name="Hunt C."/>
            <person name="Moore K."/>
            <person name="Hurst S.M."/>
            <person name="Lucas M."/>
            <person name="Rochet M."/>
            <person name="Gaillardin C."/>
            <person name="Tallada V.A."/>
            <person name="Garzon A."/>
            <person name="Thode G."/>
            <person name="Daga R.R."/>
            <person name="Cruzado L."/>
            <person name="Jimenez J."/>
            <person name="Sanchez M."/>
            <person name="del Rey F."/>
            <person name="Benito J."/>
            <person name="Dominguez A."/>
            <person name="Revuelta J.L."/>
            <person name="Moreno S."/>
            <person name="Armstrong J."/>
            <person name="Forsburg S.L."/>
            <person name="Cerutti L."/>
            <person name="Lowe T."/>
            <person name="McCombie W.R."/>
            <person name="Paulsen I."/>
            <person name="Potashkin J."/>
            <person name="Shpakovski G.V."/>
            <person name="Ussery D."/>
            <person name="Barrell B.G."/>
            <person name="Nurse P."/>
        </authorList>
    </citation>
    <scope>NUCLEOTIDE SEQUENCE [LARGE SCALE GENOMIC DNA]</scope>
    <source>
        <strain>972 / ATCC 24843</strain>
    </source>
</reference>
<reference key="2">
    <citation type="journal article" date="2006" name="Nat. Biotechnol.">
        <title>ORFeome cloning and global analysis of protein localization in the fission yeast Schizosaccharomyces pombe.</title>
        <authorList>
            <person name="Matsuyama A."/>
            <person name="Arai R."/>
            <person name="Yashiroda Y."/>
            <person name="Shirai A."/>
            <person name="Kamata A."/>
            <person name="Sekido S."/>
            <person name="Kobayashi Y."/>
            <person name="Hashimoto A."/>
            <person name="Hamamoto M."/>
            <person name="Hiraoka Y."/>
            <person name="Horinouchi S."/>
            <person name="Yoshida M."/>
        </authorList>
    </citation>
    <scope>SUBCELLULAR LOCATION [LARGE SCALE ANALYSIS]</scope>
</reference>
<sequence length="236" mass="27112">MALFRRPNWSALFEKIFIQKSFLGFCSLRVGCEIIIWFAIINKVSGLYGIVSLFQNSDASPWQVLMYVSSVLMLILFSWLAIHIPKSSVPHALILFYVYLIDFLLNVLFTVLFALSWFSKLVQSDSSSTEESADSDPSPSLLYLFFQAESIPSLLLLIFFASLKFYFVLITLSYSNKLIVDSGIRPQNLPPNFSGRVTRLLMKPYIMAANRSYLRNHTKRFTDSIELEQRLMDEVV</sequence>